<dbReference type="EMBL" id="AE014295">
    <property type="protein sequence ID" value="AAN24867.1"/>
    <property type="molecule type" value="Genomic_DNA"/>
</dbReference>
<dbReference type="RefSeq" id="NP_696231.1">
    <property type="nucleotide sequence ID" value="NC_004307.2"/>
</dbReference>
<dbReference type="RefSeq" id="WP_011068276.1">
    <property type="nucleotide sequence ID" value="NC_004307.2"/>
</dbReference>
<dbReference type="SMR" id="Q8G5F1"/>
<dbReference type="STRING" id="206672.BL1059"/>
<dbReference type="EnsemblBacteria" id="AAN24867">
    <property type="protein sequence ID" value="AAN24867"/>
    <property type="gene ID" value="BL1059"/>
</dbReference>
<dbReference type="KEGG" id="blo:BL1059"/>
<dbReference type="PATRIC" id="fig|206672.9.peg.766"/>
<dbReference type="HOGENOM" id="CLU_097103_1_1_11"/>
<dbReference type="OrthoDB" id="7060358at2"/>
<dbReference type="PhylomeDB" id="Q8G5F1"/>
<dbReference type="UniPathway" id="UPA00068"/>
<dbReference type="Proteomes" id="UP000000439">
    <property type="component" value="Chromosome"/>
</dbReference>
<dbReference type="GO" id="GO:0005737">
    <property type="term" value="C:cytoplasm"/>
    <property type="evidence" value="ECO:0007669"/>
    <property type="project" value="UniProtKB-SubCell"/>
</dbReference>
<dbReference type="GO" id="GO:0034618">
    <property type="term" value="F:arginine binding"/>
    <property type="evidence" value="ECO:0007669"/>
    <property type="project" value="InterPro"/>
</dbReference>
<dbReference type="GO" id="GO:0003677">
    <property type="term" value="F:DNA binding"/>
    <property type="evidence" value="ECO:0007669"/>
    <property type="project" value="UniProtKB-KW"/>
</dbReference>
<dbReference type="GO" id="GO:0003700">
    <property type="term" value="F:DNA-binding transcription factor activity"/>
    <property type="evidence" value="ECO:0007669"/>
    <property type="project" value="UniProtKB-UniRule"/>
</dbReference>
<dbReference type="GO" id="GO:0006526">
    <property type="term" value="P:L-arginine biosynthetic process"/>
    <property type="evidence" value="ECO:0007669"/>
    <property type="project" value="UniProtKB-UniPathway"/>
</dbReference>
<dbReference type="GO" id="GO:0051259">
    <property type="term" value="P:protein complex oligomerization"/>
    <property type="evidence" value="ECO:0007669"/>
    <property type="project" value="InterPro"/>
</dbReference>
<dbReference type="GO" id="GO:1900079">
    <property type="term" value="P:regulation of arginine biosynthetic process"/>
    <property type="evidence" value="ECO:0007669"/>
    <property type="project" value="UniProtKB-UniRule"/>
</dbReference>
<dbReference type="Gene3D" id="3.30.1360.40">
    <property type="match status" value="1"/>
</dbReference>
<dbReference type="Gene3D" id="1.10.10.10">
    <property type="entry name" value="Winged helix-like DNA-binding domain superfamily/Winged helix DNA-binding domain"/>
    <property type="match status" value="1"/>
</dbReference>
<dbReference type="HAMAP" id="MF_00173">
    <property type="entry name" value="Arg_repressor"/>
    <property type="match status" value="1"/>
</dbReference>
<dbReference type="InterPro" id="IPR001669">
    <property type="entry name" value="Arg_repress"/>
</dbReference>
<dbReference type="InterPro" id="IPR020899">
    <property type="entry name" value="Arg_repress_C"/>
</dbReference>
<dbReference type="InterPro" id="IPR036251">
    <property type="entry name" value="Arg_repress_C_sf"/>
</dbReference>
<dbReference type="InterPro" id="IPR020900">
    <property type="entry name" value="Arg_repress_DNA-bd"/>
</dbReference>
<dbReference type="InterPro" id="IPR036388">
    <property type="entry name" value="WH-like_DNA-bd_sf"/>
</dbReference>
<dbReference type="InterPro" id="IPR036390">
    <property type="entry name" value="WH_DNA-bd_sf"/>
</dbReference>
<dbReference type="PANTHER" id="PTHR34471">
    <property type="entry name" value="ARGININE REPRESSOR"/>
    <property type="match status" value="1"/>
</dbReference>
<dbReference type="PANTHER" id="PTHR34471:SF1">
    <property type="entry name" value="ARGININE REPRESSOR"/>
    <property type="match status" value="1"/>
</dbReference>
<dbReference type="Pfam" id="PF01316">
    <property type="entry name" value="Arg_repressor"/>
    <property type="match status" value="1"/>
</dbReference>
<dbReference type="Pfam" id="PF02863">
    <property type="entry name" value="Arg_repressor_C"/>
    <property type="match status" value="1"/>
</dbReference>
<dbReference type="PRINTS" id="PR01467">
    <property type="entry name" value="ARGREPRESSOR"/>
</dbReference>
<dbReference type="SUPFAM" id="SSF55252">
    <property type="entry name" value="C-terminal domain of arginine repressor"/>
    <property type="match status" value="1"/>
</dbReference>
<dbReference type="SUPFAM" id="SSF46785">
    <property type="entry name" value="Winged helix' DNA-binding domain"/>
    <property type="match status" value="1"/>
</dbReference>
<comment type="function">
    <text evidence="1">Regulates arginine biosynthesis genes.</text>
</comment>
<comment type="pathway">
    <text>Amino-acid biosynthesis; L-arginine biosynthesis [regulation].</text>
</comment>
<comment type="subcellular location">
    <subcellularLocation>
        <location evidence="1">Cytoplasm</location>
    </subcellularLocation>
</comment>
<comment type="similarity">
    <text evidence="1">Belongs to the ArgR family.</text>
</comment>
<accession>Q8G5F1</accession>
<organism>
    <name type="scientific">Bifidobacterium longum (strain NCC 2705)</name>
    <dbReference type="NCBI Taxonomy" id="206672"/>
    <lineage>
        <taxon>Bacteria</taxon>
        <taxon>Bacillati</taxon>
        <taxon>Actinomycetota</taxon>
        <taxon>Actinomycetes</taxon>
        <taxon>Bifidobacteriales</taxon>
        <taxon>Bifidobacteriaceae</taxon>
        <taxon>Bifidobacterium</taxon>
    </lineage>
</organism>
<reference key="1">
    <citation type="journal article" date="2002" name="Proc. Natl. Acad. Sci. U.S.A.">
        <title>The genome sequence of Bifidobacterium longum reflects its adaptation to the human gastrointestinal tract.</title>
        <authorList>
            <person name="Schell M.A."/>
            <person name="Karmirantzou M."/>
            <person name="Snel B."/>
            <person name="Vilanova D."/>
            <person name="Berger B."/>
            <person name="Pessi G."/>
            <person name="Zwahlen M.-C."/>
            <person name="Desiere F."/>
            <person name="Bork P."/>
            <person name="Delley M."/>
            <person name="Pridmore R.D."/>
            <person name="Arigoni F."/>
        </authorList>
    </citation>
    <scope>NUCLEOTIDE SEQUENCE [LARGE SCALE GENOMIC DNA]</scope>
    <source>
        <strain>NCC 2705</strain>
    </source>
</reference>
<name>ARGR_BIFLO</name>
<proteinExistence type="inferred from homology"/>
<evidence type="ECO:0000255" key="1">
    <source>
        <dbReference type="HAMAP-Rule" id="MF_00173"/>
    </source>
</evidence>
<feature type="chain" id="PRO_0000205074" description="Arginine repressor">
    <location>
        <begin position="1"/>
        <end position="170"/>
    </location>
</feature>
<gene>
    <name evidence="1" type="primary">argR</name>
    <name type="ordered locus">BL1059</name>
</gene>
<protein>
    <recommendedName>
        <fullName evidence="1">Arginine repressor</fullName>
    </recommendedName>
</protein>
<keyword id="KW-0028">Amino-acid biosynthesis</keyword>
<keyword id="KW-0055">Arginine biosynthesis</keyword>
<keyword id="KW-0963">Cytoplasm</keyword>
<keyword id="KW-0238">DNA-binding</keyword>
<keyword id="KW-1185">Reference proteome</keyword>
<keyword id="KW-0678">Repressor</keyword>
<keyword id="KW-0804">Transcription</keyword>
<keyword id="KW-0805">Transcription regulation</keyword>
<sequence length="170" mass="17804">MSETGPSLQRPATRAARLSAIEQALATHIITSQSQLSKILIDEGIAVTQATLSRDLDEMHAVKTRLKDGTVAYTVGRSVVASEGEDVGERGEAQMSRVLNGLVTSVAAAGNLVVVHTPSGAAQYVASVIDKQPIEGVLGTIAGDDTVMVICTNDDTAVFRSDWLLSLASK</sequence>